<evidence type="ECO:0000255" key="1">
    <source>
        <dbReference type="HAMAP-Rule" id="MF_01341"/>
    </source>
</evidence>
<evidence type="ECO:0000256" key="2">
    <source>
        <dbReference type="SAM" id="MobiDB-lite"/>
    </source>
</evidence>
<evidence type="ECO:0000305" key="3"/>
<feature type="chain" id="PRO_0000104748" description="Large ribosomal subunit protein uL15">
    <location>
        <begin position="1"/>
        <end position="144"/>
    </location>
</feature>
<feature type="region of interest" description="Disordered" evidence="2">
    <location>
        <begin position="1"/>
        <end position="53"/>
    </location>
</feature>
<feature type="compositionally biased region" description="Gly residues" evidence="2">
    <location>
        <begin position="21"/>
        <end position="31"/>
    </location>
</feature>
<dbReference type="EMBL" id="AE016827">
    <property type="protein sequence ID" value="AAU38636.1"/>
    <property type="molecule type" value="Genomic_DNA"/>
</dbReference>
<dbReference type="RefSeq" id="WP_011201187.1">
    <property type="nucleotide sequence ID" value="NC_006300.1"/>
</dbReference>
<dbReference type="SMR" id="Q65QX4"/>
<dbReference type="STRING" id="221988.MS2029"/>
<dbReference type="KEGG" id="msu:MS2029"/>
<dbReference type="eggNOG" id="COG0200">
    <property type="taxonomic scope" value="Bacteria"/>
</dbReference>
<dbReference type="HOGENOM" id="CLU_055188_4_2_6"/>
<dbReference type="OrthoDB" id="9810293at2"/>
<dbReference type="Proteomes" id="UP000000607">
    <property type="component" value="Chromosome"/>
</dbReference>
<dbReference type="GO" id="GO:0022625">
    <property type="term" value="C:cytosolic large ribosomal subunit"/>
    <property type="evidence" value="ECO:0007669"/>
    <property type="project" value="TreeGrafter"/>
</dbReference>
<dbReference type="GO" id="GO:0019843">
    <property type="term" value="F:rRNA binding"/>
    <property type="evidence" value="ECO:0007669"/>
    <property type="project" value="UniProtKB-UniRule"/>
</dbReference>
<dbReference type="GO" id="GO:0003735">
    <property type="term" value="F:structural constituent of ribosome"/>
    <property type="evidence" value="ECO:0007669"/>
    <property type="project" value="InterPro"/>
</dbReference>
<dbReference type="GO" id="GO:0006412">
    <property type="term" value="P:translation"/>
    <property type="evidence" value="ECO:0007669"/>
    <property type="project" value="UniProtKB-UniRule"/>
</dbReference>
<dbReference type="Gene3D" id="3.100.10.10">
    <property type="match status" value="1"/>
</dbReference>
<dbReference type="HAMAP" id="MF_01341">
    <property type="entry name" value="Ribosomal_uL15"/>
    <property type="match status" value="1"/>
</dbReference>
<dbReference type="InterPro" id="IPR030878">
    <property type="entry name" value="Ribosomal_uL15"/>
</dbReference>
<dbReference type="InterPro" id="IPR021131">
    <property type="entry name" value="Ribosomal_uL15/eL18"/>
</dbReference>
<dbReference type="InterPro" id="IPR036227">
    <property type="entry name" value="Ribosomal_uL15/eL18_sf"/>
</dbReference>
<dbReference type="InterPro" id="IPR005749">
    <property type="entry name" value="Ribosomal_uL15_bac-type"/>
</dbReference>
<dbReference type="InterPro" id="IPR001196">
    <property type="entry name" value="Ribosomal_uL15_CS"/>
</dbReference>
<dbReference type="NCBIfam" id="TIGR01071">
    <property type="entry name" value="rplO_bact"/>
    <property type="match status" value="1"/>
</dbReference>
<dbReference type="PANTHER" id="PTHR12934">
    <property type="entry name" value="50S RIBOSOMAL PROTEIN L15"/>
    <property type="match status" value="1"/>
</dbReference>
<dbReference type="PANTHER" id="PTHR12934:SF11">
    <property type="entry name" value="LARGE RIBOSOMAL SUBUNIT PROTEIN UL15M"/>
    <property type="match status" value="1"/>
</dbReference>
<dbReference type="Pfam" id="PF00828">
    <property type="entry name" value="Ribosomal_L27A"/>
    <property type="match status" value="1"/>
</dbReference>
<dbReference type="SUPFAM" id="SSF52080">
    <property type="entry name" value="Ribosomal proteins L15p and L18e"/>
    <property type="match status" value="1"/>
</dbReference>
<dbReference type="PROSITE" id="PS00475">
    <property type="entry name" value="RIBOSOMAL_L15"/>
    <property type="match status" value="1"/>
</dbReference>
<proteinExistence type="inferred from homology"/>
<keyword id="KW-0687">Ribonucleoprotein</keyword>
<keyword id="KW-0689">Ribosomal protein</keyword>
<keyword id="KW-0694">RNA-binding</keyword>
<keyword id="KW-0699">rRNA-binding</keyword>
<protein>
    <recommendedName>
        <fullName evidence="1">Large ribosomal subunit protein uL15</fullName>
    </recommendedName>
    <alternativeName>
        <fullName evidence="3">50S ribosomal protein L15</fullName>
    </alternativeName>
</protein>
<organism>
    <name type="scientific">Mannheimia succiniciproducens (strain KCTC 0769BP / MBEL55E)</name>
    <dbReference type="NCBI Taxonomy" id="221988"/>
    <lineage>
        <taxon>Bacteria</taxon>
        <taxon>Pseudomonadati</taxon>
        <taxon>Pseudomonadota</taxon>
        <taxon>Gammaproteobacteria</taxon>
        <taxon>Pasteurellales</taxon>
        <taxon>Pasteurellaceae</taxon>
        <taxon>Basfia</taxon>
    </lineage>
</organism>
<gene>
    <name evidence="1" type="primary">rplO</name>
    <name type="ordered locus">MS2029</name>
</gene>
<name>RL15_MANSM</name>
<reference key="1">
    <citation type="journal article" date="2004" name="Nat. Biotechnol.">
        <title>The genome sequence of the capnophilic rumen bacterium Mannheimia succiniciproducens.</title>
        <authorList>
            <person name="Hong S.H."/>
            <person name="Kim J.S."/>
            <person name="Lee S.Y."/>
            <person name="In Y.H."/>
            <person name="Choi S.S."/>
            <person name="Rih J.-K."/>
            <person name="Kim C.H."/>
            <person name="Jeong H."/>
            <person name="Hur C.G."/>
            <person name="Kim J.J."/>
        </authorList>
    </citation>
    <scope>NUCLEOTIDE SEQUENCE [LARGE SCALE GENOMIC DNA]</scope>
    <source>
        <strain>KCTC 0769BP / MBEL55E</strain>
    </source>
</reference>
<comment type="function">
    <text evidence="1">Binds to the 23S rRNA.</text>
</comment>
<comment type="subunit">
    <text evidence="1">Part of the 50S ribosomal subunit.</text>
</comment>
<comment type="similarity">
    <text evidence="1">Belongs to the universal ribosomal protein uL15 family.</text>
</comment>
<sequence>MYLNTLAPAEGAKHSAKRLGRGIGSGLGKTGGRGHKGQKSRTGGGVRRGFEGGQMPLYRRLPKFGFTSMKAAVTAEIRLNDLTKVENNVVTLESLKAANIITKDIQFAKVVLAGEVKGAVTVRGLRVTKGAKAAIEAAGGSVEE</sequence>
<accession>Q65QX4</accession>